<sequence length="468" mass="53930">MKQFMDKDFLLSTPTAQHLFHDYAAKMPILDYHCHINPREIAEDRKFENITQVWLGGDHYKWRQMRTNGVDEKYITGDASDREKFQKWAETLEMAIGNPLYHWSHLELQRYFGYNGILNGDTAEEVWNLCNAKLQEDSMSVRNLIKQSNVTLICTTDDPVDSLEWHQVLKDDKTFDVQVLPAWRPDKAMNIEKPEYLDYLETLSNVSGIKVNSFASLIDALKNRMDFFASMGCSVSDHALEYVMYKPYTEEEIEAIFAKRFSGSAITTEEMNKFKTAFMVSVGKEYNKRNWVMQIHYGTIRDNNRFRYDQLGPDTGFDCINTYDCSAEMAQFLNALNATDELPKTIIYSLNPSVNAAIGTVIGCFQDSKAVGKIQQGSAWWFNDHKVGMTNQMTSLANLSLLGNFIGMLTDSRSFLSYTRHEYFRRIMCELIGGWVENGEYPADEKALKKIVEGISYNNAVRYFGFDL</sequence>
<accession>C4Z5P8</accession>
<comment type="catalytic activity">
    <reaction evidence="1">
        <text>D-glucuronate = D-fructuronate</text>
        <dbReference type="Rhea" id="RHEA:13049"/>
        <dbReference type="ChEBI" id="CHEBI:58720"/>
        <dbReference type="ChEBI" id="CHEBI:59863"/>
        <dbReference type="EC" id="5.3.1.12"/>
    </reaction>
</comment>
<comment type="catalytic activity">
    <reaction evidence="1">
        <text>aldehydo-D-galacturonate = keto-D-tagaturonate</text>
        <dbReference type="Rhea" id="RHEA:27702"/>
        <dbReference type="ChEBI" id="CHEBI:12952"/>
        <dbReference type="ChEBI" id="CHEBI:17886"/>
        <dbReference type="EC" id="5.3.1.12"/>
    </reaction>
</comment>
<comment type="pathway">
    <text evidence="1">Carbohydrate metabolism; pentose and glucuronate interconversion.</text>
</comment>
<comment type="similarity">
    <text evidence="1">Belongs to the metallo-dependent hydrolases superfamily. Uronate isomerase family.</text>
</comment>
<reference key="1">
    <citation type="journal article" date="2009" name="Proc. Natl. Acad. Sci. U.S.A.">
        <title>Characterizing a model human gut microbiota composed of members of its two dominant bacterial phyla.</title>
        <authorList>
            <person name="Mahowald M.A."/>
            <person name="Rey F.E."/>
            <person name="Seedorf H."/>
            <person name="Turnbaugh P.J."/>
            <person name="Fulton R.S."/>
            <person name="Wollam A."/>
            <person name="Shah N."/>
            <person name="Wang C."/>
            <person name="Magrini V."/>
            <person name="Wilson R.K."/>
            <person name="Cantarel B.L."/>
            <person name="Coutinho P.M."/>
            <person name="Henrissat B."/>
            <person name="Crock L.W."/>
            <person name="Russell A."/>
            <person name="Verberkmoes N.C."/>
            <person name="Hettich R.L."/>
            <person name="Gordon J.I."/>
        </authorList>
    </citation>
    <scope>NUCLEOTIDE SEQUENCE [LARGE SCALE GENOMIC DNA]</scope>
    <source>
        <strain>ATCC 27750 / DSM 3376 / VPI C15-48 / C15-B4</strain>
    </source>
</reference>
<proteinExistence type="inferred from homology"/>
<gene>
    <name evidence="1" type="primary">uxaC</name>
    <name type="ordered locus">EUBELI_00905</name>
</gene>
<organism>
    <name type="scientific">Lachnospira eligens (strain ATCC 27750 / DSM 3376 / VPI C15-48 / C15-B4)</name>
    <name type="common">Eubacterium eligens</name>
    <dbReference type="NCBI Taxonomy" id="515620"/>
    <lineage>
        <taxon>Bacteria</taxon>
        <taxon>Bacillati</taxon>
        <taxon>Bacillota</taxon>
        <taxon>Clostridia</taxon>
        <taxon>Lachnospirales</taxon>
        <taxon>Lachnospiraceae</taxon>
        <taxon>Lachnospira</taxon>
    </lineage>
</organism>
<protein>
    <recommendedName>
        <fullName evidence="1">Uronate isomerase</fullName>
        <ecNumber evidence="1">5.3.1.12</ecNumber>
    </recommendedName>
    <alternativeName>
        <fullName evidence="1">Glucuronate isomerase</fullName>
    </alternativeName>
    <alternativeName>
        <fullName evidence="1">Uronic isomerase</fullName>
    </alternativeName>
</protein>
<evidence type="ECO:0000255" key="1">
    <source>
        <dbReference type="HAMAP-Rule" id="MF_00675"/>
    </source>
</evidence>
<feature type="chain" id="PRO_1000212518" description="Uronate isomerase">
    <location>
        <begin position="1"/>
        <end position="468"/>
    </location>
</feature>
<keyword id="KW-0413">Isomerase</keyword>
<keyword id="KW-1185">Reference proteome</keyword>
<dbReference type="EC" id="5.3.1.12" evidence="1"/>
<dbReference type="EMBL" id="CP001104">
    <property type="protein sequence ID" value="ACR71907.1"/>
    <property type="molecule type" value="Genomic_DNA"/>
</dbReference>
<dbReference type="RefSeq" id="WP_012739143.1">
    <property type="nucleotide sequence ID" value="NC_012778.1"/>
</dbReference>
<dbReference type="SMR" id="C4Z5P8"/>
<dbReference type="STRING" id="515620.EUBELI_00905"/>
<dbReference type="GeneID" id="41355640"/>
<dbReference type="KEGG" id="eel:EUBELI_00905"/>
<dbReference type="eggNOG" id="COG1904">
    <property type="taxonomic scope" value="Bacteria"/>
</dbReference>
<dbReference type="HOGENOM" id="CLU_044465_1_0_9"/>
<dbReference type="UniPathway" id="UPA00246"/>
<dbReference type="Proteomes" id="UP000001476">
    <property type="component" value="Chromosome"/>
</dbReference>
<dbReference type="GO" id="GO:0008880">
    <property type="term" value="F:glucuronate isomerase activity"/>
    <property type="evidence" value="ECO:0007669"/>
    <property type="project" value="UniProtKB-UniRule"/>
</dbReference>
<dbReference type="GO" id="GO:0019698">
    <property type="term" value="P:D-galacturonate catabolic process"/>
    <property type="evidence" value="ECO:0007669"/>
    <property type="project" value="TreeGrafter"/>
</dbReference>
<dbReference type="GO" id="GO:0042840">
    <property type="term" value="P:D-glucuronate catabolic process"/>
    <property type="evidence" value="ECO:0007669"/>
    <property type="project" value="TreeGrafter"/>
</dbReference>
<dbReference type="Gene3D" id="3.20.20.140">
    <property type="entry name" value="Metal-dependent hydrolases"/>
    <property type="match status" value="1"/>
</dbReference>
<dbReference type="Gene3D" id="1.10.2020.10">
    <property type="entry name" value="uronate isomerase, domain 2, chain A"/>
    <property type="match status" value="1"/>
</dbReference>
<dbReference type="HAMAP" id="MF_00675">
    <property type="entry name" value="UxaC"/>
    <property type="match status" value="1"/>
</dbReference>
<dbReference type="InterPro" id="IPR032466">
    <property type="entry name" value="Metal_Hydrolase"/>
</dbReference>
<dbReference type="InterPro" id="IPR003766">
    <property type="entry name" value="Uronate_isomerase"/>
</dbReference>
<dbReference type="NCBIfam" id="NF002794">
    <property type="entry name" value="PRK02925.1"/>
    <property type="match status" value="1"/>
</dbReference>
<dbReference type="PANTHER" id="PTHR30068">
    <property type="entry name" value="URONATE ISOMERASE"/>
    <property type="match status" value="1"/>
</dbReference>
<dbReference type="PANTHER" id="PTHR30068:SF4">
    <property type="entry name" value="URONATE ISOMERASE"/>
    <property type="match status" value="1"/>
</dbReference>
<dbReference type="Pfam" id="PF02614">
    <property type="entry name" value="UxaC"/>
    <property type="match status" value="1"/>
</dbReference>
<dbReference type="SUPFAM" id="SSF51556">
    <property type="entry name" value="Metallo-dependent hydrolases"/>
    <property type="match status" value="1"/>
</dbReference>
<name>UXAC_LACE2</name>